<feature type="chain" id="PRO_0000129203" description="Large ribosomal subunit protein uL4">
    <location>
        <begin position="1"/>
        <end position="224"/>
    </location>
</feature>
<feature type="region of interest" description="Disordered" evidence="2">
    <location>
        <begin position="53"/>
        <end position="74"/>
    </location>
</feature>
<gene>
    <name evidence="1" type="primary">rplD</name>
    <name type="synonym">rl4</name>
    <name type="ordered locus">CPn_0646</name>
    <name type="ordered locus">CP_0101</name>
    <name type="ordered locus">CpB0672</name>
</gene>
<sequence length="224" mass="25066">MVLLSKFDFSGNKIGEVEVADSLFADEGDGLQLIKDYIVAIRANKRQWSACTRNRSEVSHSTKKPFKQKGTGNARQGCLASPQFRGGGIVFGPKPKFNQHVRINRKERKAAIRLLLAQKIQTNKLTVVDDTVFVDALTAPKTQSALRFLKDCNVECRSILFIDHLDHVEKNENLRLSLRNLTAVKGFVYGININGYDLASAHNIVISKKALQELVERLVSETKD</sequence>
<dbReference type="EMBL" id="AE001363">
    <property type="protein sequence ID" value="AAD18785.1"/>
    <property type="molecule type" value="Genomic_DNA"/>
</dbReference>
<dbReference type="EMBL" id="AE002161">
    <property type="protein sequence ID" value="AAF37985.1"/>
    <property type="molecule type" value="Genomic_DNA"/>
</dbReference>
<dbReference type="EMBL" id="BA000008">
    <property type="protein sequence ID" value="BAA98853.1"/>
    <property type="molecule type" value="Genomic_DNA"/>
</dbReference>
<dbReference type="EMBL" id="AE009440">
    <property type="protein sequence ID" value="AAP98601.1"/>
    <property type="molecule type" value="Genomic_DNA"/>
</dbReference>
<dbReference type="PIR" id="C86571">
    <property type="entry name" value="C86571"/>
</dbReference>
<dbReference type="PIR" id="H72055">
    <property type="entry name" value="H72055"/>
</dbReference>
<dbReference type="RefSeq" id="NP_224842.1">
    <property type="nucleotide sequence ID" value="NC_000922.1"/>
</dbReference>
<dbReference type="RefSeq" id="WP_010883284.1">
    <property type="nucleotide sequence ID" value="NZ_LN847257.1"/>
</dbReference>
<dbReference type="SMR" id="Q9Z7Q8"/>
<dbReference type="STRING" id="406984.CPK_ORF00046"/>
<dbReference type="GeneID" id="45050696"/>
<dbReference type="KEGG" id="cpa:CP_0101"/>
<dbReference type="KEGG" id="cpj:rl4"/>
<dbReference type="KEGG" id="cpn:CPn_0646"/>
<dbReference type="KEGG" id="cpt:CpB0672"/>
<dbReference type="PATRIC" id="fig|115713.3.peg.716"/>
<dbReference type="eggNOG" id="COG0088">
    <property type="taxonomic scope" value="Bacteria"/>
</dbReference>
<dbReference type="HOGENOM" id="CLU_041575_5_2_0"/>
<dbReference type="OrthoDB" id="9803201at2"/>
<dbReference type="Proteomes" id="UP000000583">
    <property type="component" value="Chromosome"/>
</dbReference>
<dbReference type="Proteomes" id="UP000000801">
    <property type="component" value="Chromosome"/>
</dbReference>
<dbReference type="GO" id="GO:1990904">
    <property type="term" value="C:ribonucleoprotein complex"/>
    <property type="evidence" value="ECO:0007669"/>
    <property type="project" value="UniProtKB-KW"/>
</dbReference>
<dbReference type="GO" id="GO:0005840">
    <property type="term" value="C:ribosome"/>
    <property type="evidence" value="ECO:0007669"/>
    <property type="project" value="UniProtKB-KW"/>
</dbReference>
<dbReference type="GO" id="GO:0019843">
    <property type="term" value="F:rRNA binding"/>
    <property type="evidence" value="ECO:0007669"/>
    <property type="project" value="UniProtKB-UniRule"/>
</dbReference>
<dbReference type="GO" id="GO:0003735">
    <property type="term" value="F:structural constituent of ribosome"/>
    <property type="evidence" value="ECO:0007669"/>
    <property type="project" value="InterPro"/>
</dbReference>
<dbReference type="GO" id="GO:0006412">
    <property type="term" value="P:translation"/>
    <property type="evidence" value="ECO:0007669"/>
    <property type="project" value="UniProtKB-UniRule"/>
</dbReference>
<dbReference type="Gene3D" id="3.40.1370.10">
    <property type="match status" value="1"/>
</dbReference>
<dbReference type="HAMAP" id="MF_01328_B">
    <property type="entry name" value="Ribosomal_uL4_B"/>
    <property type="match status" value="1"/>
</dbReference>
<dbReference type="InterPro" id="IPR002136">
    <property type="entry name" value="Ribosomal_uL4"/>
</dbReference>
<dbReference type="InterPro" id="IPR013005">
    <property type="entry name" value="Ribosomal_uL4-like"/>
</dbReference>
<dbReference type="InterPro" id="IPR023574">
    <property type="entry name" value="Ribosomal_uL4_dom_sf"/>
</dbReference>
<dbReference type="NCBIfam" id="TIGR03953">
    <property type="entry name" value="rplD_bact"/>
    <property type="match status" value="1"/>
</dbReference>
<dbReference type="PANTHER" id="PTHR10746">
    <property type="entry name" value="50S RIBOSOMAL PROTEIN L4"/>
    <property type="match status" value="1"/>
</dbReference>
<dbReference type="PANTHER" id="PTHR10746:SF6">
    <property type="entry name" value="LARGE RIBOSOMAL SUBUNIT PROTEIN UL4M"/>
    <property type="match status" value="1"/>
</dbReference>
<dbReference type="Pfam" id="PF00573">
    <property type="entry name" value="Ribosomal_L4"/>
    <property type="match status" value="1"/>
</dbReference>
<dbReference type="SUPFAM" id="SSF52166">
    <property type="entry name" value="Ribosomal protein L4"/>
    <property type="match status" value="1"/>
</dbReference>
<name>RL4_CHLPN</name>
<comment type="function">
    <text evidence="1">One of the primary rRNA binding proteins, this protein initially binds near the 5'-end of the 23S rRNA. It is important during the early stages of 50S assembly. It makes multiple contacts with different domains of the 23S rRNA in the assembled 50S subunit and ribosome.</text>
</comment>
<comment type="function">
    <text evidence="1">Forms part of the polypeptide exit tunnel.</text>
</comment>
<comment type="subunit">
    <text evidence="1">Part of the 50S ribosomal subunit.</text>
</comment>
<comment type="similarity">
    <text evidence="1">Belongs to the universal ribosomal protein uL4 family.</text>
</comment>
<keyword id="KW-0687">Ribonucleoprotein</keyword>
<keyword id="KW-0689">Ribosomal protein</keyword>
<keyword id="KW-0694">RNA-binding</keyword>
<keyword id="KW-0699">rRNA-binding</keyword>
<reference key="1">
    <citation type="journal article" date="1999" name="Nat. Genet.">
        <title>Comparative genomes of Chlamydia pneumoniae and C. trachomatis.</title>
        <authorList>
            <person name="Kalman S."/>
            <person name="Mitchell W.P."/>
            <person name="Marathe R."/>
            <person name="Lammel C.J."/>
            <person name="Fan J."/>
            <person name="Hyman R.W."/>
            <person name="Olinger L."/>
            <person name="Grimwood J."/>
            <person name="Davis R.W."/>
            <person name="Stephens R.S."/>
        </authorList>
    </citation>
    <scope>NUCLEOTIDE SEQUENCE [LARGE SCALE GENOMIC DNA]</scope>
    <source>
        <strain>CWL029</strain>
    </source>
</reference>
<reference key="2">
    <citation type="journal article" date="2000" name="Nucleic Acids Res.">
        <title>Genome sequences of Chlamydia trachomatis MoPn and Chlamydia pneumoniae AR39.</title>
        <authorList>
            <person name="Read T.D."/>
            <person name="Brunham R.C."/>
            <person name="Shen C."/>
            <person name="Gill S.R."/>
            <person name="Heidelberg J.F."/>
            <person name="White O."/>
            <person name="Hickey E.K."/>
            <person name="Peterson J.D."/>
            <person name="Utterback T.R."/>
            <person name="Berry K.J."/>
            <person name="Bass S."/>
            <person name="Linher K.D."/>
            <person name="Weidman J.F."/>
            <person name="Khouri H.M."/>
            <person name="Craven B."/>
            <person name="Bowman C."/>
            <person name="Dodson R.J."/>
            <person name="Gwinn M.L."/>
            <person name="Nelson W.C."/>
            <person name="DeBoy R.T."/>
            <person name="Kolonay J.F."/>
            <person name="McClarty G."/>
            <person name="Salzberg S.L."/>
            <person name="Eisen J.A."/>
            <person name="Fraser C.M."/>
        </authorList>
    </citation>
    <scope>NUCLEOTIDE SEQUENCE [LARGE SCALE GENOMIC DNA]</scope>
    <source>
        <strain>AR39</strain>
    </source>
</reference>
<reference key="3">
    <citation type="journal article" date="2000" name="Nucleic Acids Res.">
        <title>Comparison of whole genome sequences of Chlamydia pneumoniae J138 from Japan and CWL029 from USA.</title>
        <authorList>
            <person name="Shirai M."/>
            <person name="Hirakawa H."/>
            <person name="Kimoto M."/>
            <person name="Tabuchi M."/>
            <person name="Kishi F."/>
            <person name="Ouchi K."/>
            <person name="Shiba T."/>
            <person name="Ishii K."/>
            <person name="Hattori M."/>
            <person name="Kuhara S."/>
            <person name="Nakazawa T."/>
        </authorList>
    </citation>
    <scope>NUCLEOTIDE SEQUENCE [LARGE SCALE GENOMIC DNA]</scope>
    <source>
        <strain>J138</strain>
    </source>
</reference>
<reference key="4">
    <citation type="submission" date="2002-05" db="EMBL/GenBank/DDBJ databases">
        <title>The genome sequence of Chlamydia pneumoniae TW183 and comparison with other Chlamydia strains based on whole genome sequence analysis.</title>
        <authorList>
            <person name="Geng M.M."/>
            <person name="Schuhmacher A."/>
            <person name="Muehldorfer I."/>
            <person name="Bensch K.W."/>
            <person name="Schaefer K.P."/>
            <person name="Schneider S."/>
            <person name="Pohl T."/>
            <person name="Essig A."/>
            <person name="Marre R."/>
            <person name="Melchers K."/>
        </authorList>
    </citation>
    <scope>NUCLEOTIDE SEQUENCE [LARGE SCALE GENOMIC DNA]</scope>
    <source>
        <strain>TW-183</strain>
    </source>
</reference>
<evidence type="ECO:0000255" key="1">
    <source>
        <dbReference type="HAMAP-Rule" id="MF_01328"/>
    </source>
</evidence>
<evidence type="ECO:0000256" key="2">
    <source>
        <dbReference type="SAM" id="MobiDB-lite"/>
    </source>
</evidence>
<evidence type="ECO:0000305" key="3"/>
<accession>Q9Z7Q8</accession>
<accession>Q9JQ20</accession>
<protein>
    <recommendedName>
        <fullName evidence="1">Large ribosomal subunit protein uL4</fullName>
    </recommendedName>
    <alternativeName>
        <fullName evidence="3">50S ribosomal protein L4</fullName>
    </alternativeName>
</protein>
<organism>
    <name type="scientific">Chlamydia pneumoniae</name>
    <name type="common">Chlamydophila pneumoniae</name>
    <dbReference type="NCBI Taxonomy" id="83558"/>
    <lineage>
        <taxon>Bacteria</taxon>
        <taxon>Pseudomonadati</taxon>
        <taxon>Chlamydiota</taxon>
        <taxon>Chlamydiia</taxon>
        <taxon>Chlamydiales</taxon>
        <taxon>Chlamydiaceae</taxon>
        <taxon>Chlamydia/Chlamydophila group</taxon>
        <taxon>Chlamydia</taxon>
    </lineage>
</organism>
<proteinExistence type="inferred from homology"/>